<dbReference type="EC" id="4.2.1.182" evidence="1"/>
<dbReference type="EMBL" id="CP000477">
    <property type="protein sequence ID" value="ABK14006.1"/>
    <property type="molecule type" value="Genomic_DNA"/>
</dbReference>
<dbReference type="RefSeq" id="WP_011695405.1">
    <property type="nucleotide sequence ID" value="NC_008553.1"/>
</dbReference>
<dbReference type="SMR" id="A0B5N2"/>
<dbReference type="STRING" id="349307.Mthe_0208"/>
<dbReference type="GeneID" id="4462989"/>
<dbReference type="KEGG" id="mtp:Mthe_0208"/>
<dbReference type="HOGENOM" id="CLU_141583_2_0_2"/>
<dbReference type="OrthoDB" id="18062at2157"/>
<dbReference type="UniPathway" id="UPA00057"/>
<dbReference type="Proteomes" id="UP000000674">
    <property type="component" value="Chromosome"/>
</dbReference>
<dbReference type="GO" id="GO:0016836">
    <property type="term" value="F:hydro-lyase activity"/>
    <property type="evidence" value="ECO:0007669"/>
    <property type="project" value="UniProtKB-UniRule"/>
</dbReference>
<dbReference type="GO" id="GO:0019287">
    <property type="term" value="P:isopentenyl diphosphate biosynthetic process, mevalonate pathway"/>
    <property type="evidence" value="ECO:0007669"/>
    <property type="project" value="UniProtKB-UniRule"/>
</dbReference>
<dbReference type="CDD" id="cd01356">
    <property type="entry name" value="AcnX_swivel"/>
    <property type="match status" value="1"/>
</dbReference>
<dbReference type="Gene3D" id="3.50.30.10">
    <property type="entry name" value="Phosphohistidine domain"/>
    <property type="match status" value="1"/>
</dbReference>
<dbReference type="HAMAP" id="MF_00078">
    <property type="entry name" value="PMDh_S"/>
    <property type="match status" value="1"/>
</dbReference>
<dbReference type="InterPro" id="IPR012016">
    <property type="entry name" value="PMDh-S-like"/>
</dbReference>
<dbReference type="InterPro" id="IPR002840">
    <property type="entry name" value="PMDh-S-like_dom"/>
</dbReference>
<dbReference type="InterPro" id="IPR020794">
    <property type="entry name" value="PMDh_S"/>
</dbReference>
<dbReference type="NCBIfam" id="NF003046">
    <property type="entry name" value="PRK03955.1"/>
    <property type="match status" value="1"/>
</dbReference>
<dbReference type="PANTHER" id="PTHR36577">
    <property type="entry name" value="DUF521 DOMAIN PROTEIN (AFU_ORTHOLOGUE AFUA_6G00490)"/>
    <property type="match status" value="1"/>
</dbReference>
<dbReference type="PANTHER" id="PTHR36577:SF3">
    <property type="entry name" value="DUF521 DOMAIN PROTEIN (AFU_ORTHOLOGUE AFUA_6G00490)"/>
    <property type="match status" value="1"/>
</dbReference>
<dbReference type="Pfam" id="PF01989">
    <property type="entry name" value="AcnX_swivel_put"/>
    <property type="match status" value="1"/>
</dbReference>
<dbReference type="PIRSF" id="PIRSF004966">
    <property type="entry name" value="UCP004966"/>
    <property type="match status" value="1"/>
</dbReference>
<dbReference type="SUPFAM" id="SSF52016">
    <property type="entry name" value="LeuD/IlvD-like"/>
    <property type="match status" value="1"/>
</dbReference>
<feature type="chain" id="PRO_1000009474" description="Phosphomevalonate dehydratase small subunit">
    <location>
        <begin position="1"/>
        <end position="137"/>
    </location>
</feature>
<feature type="active site" description="Proton acceptor" evidence="1">
    <location>
        <position position="62"/>
    </location>
</feature>
<comment type="function">
    <text evidence="1">Component of a hydro-lyase that catalyzes the dehydration of mevalonate 5-phosphate (MVA5P) to form trans-anhydromevalonate 5-phosphate (tAHMP). Involved in the archaeal mevalonate (MVA) pathway, which provides fundamental precursors for isoprenoid biosynthesis, such as isopentenyl diphosphate (IPP) and dimethylallyl diphosphate (DMAPP).</text>
</comment>
<comment type="catalytic activity">
    <reaction evidence="1">
        <text>(R)-5-phosphomevalonate = (2E)-3-methyl-5-phosphooxypent-2-enoate + H2O</text>
        <dbReference type="Rhea" id="RHEA:78975"/>
        <dbReference type="ChEBI" id="CHEBI:15377"/>
        <dbReference type="ChEBI" id="CHEBI:58146"/>
        <dbReference type="ChEBI" id="CHEBI:229665"/>
        <dbReference type="EC" id="4.2.1.182"/>
    </reaction>
    <physiologicalReaction direction="left-to-right" evidence="1">
        <dbReference type="Rhea" id="RHEA:78976"/>
    </physiologicalReaction>
</comment>
<comment type="pathway">
    <text evidence="1">Isoprenoid biosynthesis; isopentenyl diphosphate biosynthesis via mevalonate pathway.</text>
</comment>
<comment type="subunit">
    <text evidence="1">Heterodimer composed of a large subunit (PMDh-L) and a small subunit (PMDh-S).</text>
</comment>
<comment type="similarity">
    <text evidence="1">Belongs to the AcnX type II small subunit family.</text>
</comment>
<name>PMDHS_METTP</name>
<accession>A0B5N2</accession>
<evidence type="ECO:0000255" key="1">
    <source>
        <dbReference type="HAMAP-Rule" id="MF_00078"/>
    </source>
</evidence>
<proteinExistence type="inferred from homology"/>
<gene>
    <name type="ordered locus">Mthe_0208</name>
</gene>
<keyword id="KW-0414">Isoprene biosynthesis</keyword>
<keyword id="KW-0456">Lyase</keyword>
<keyword id="KW-1185">Reference proteome</keyword>
<sequence>MEIKCHRVSGGCAEGPALVTRERISFLGNVDPETGVVVDPAHELYGRSIAGVVLIFPGGKGSTVGSYVIYQLRKRGMAPAAMINLKSEPIVAVGAIISDIPLVDRVPEWILDVKDGTRVVVDARREVVVLPDGSVKV</sequence>
<reference key="1">
    <citation type="submission" date="2006-10" db="EMBL/GenBank/DDBJ databases">
        <title>Complete sequence of Methanosaeta thermophila PT.</title>
        <authorList>
            <consortium name="US DOE Joint Genome Institute"/>
            <person name="Copeland A."/>
            <person name="Lucas S."/>
            <person name="Lapidus A."/>
            <person name="Barry K."/>
            <person name="Detter J.C."/>
            <person name="Glavina del Rio T."/>
            <person name="Hammon N."/>
            <person name="Israni S."/>
            <person name="Pitluck S."/>
            <person name="Chain P."/>
            <person name="Malfatti S."/>
            <person name="Shin M."/>
            <person name="Vergez L."/>
            <person name="Schmutz J."/>
            <person name="Larimer F."/>
            <person name="Land M."/>
            <person name="Hauser L."/>
            <person name="Kyrpides N."/>
            <person name="Kim E."/>
            <person name="Smith K.S."/>
            <person name="Ingram-Smith C."/>
            <person name="Richardson P."/>
        </authorList>
    </citation>
    <scope>NUCLEOTIDE SEQUENCE [LARGE SCALE GENOMIC DNA]</scope>
    <source>
        <strain>DSM 6194 / JCM 14653 / NBRC 101360 / PT</strain>
    </source>
</reference>
<protein>
    <recommendedName>
        <fullName evidence="1">Phosphomevalonate dehydratase small subunit</fullName>
        <shortName evidence="1">PMDh small subunit</shortName>
        <shortName evidence="1">PMDh-S</shortName>
        <ecNumber evidence="1">4.2.1.182</ecNumber>
    </recommendedName>
</protein>
<organism>
    <name type="scientific">Methanothrix thermoacetophila (strain DSM 6194 / JCM 14653 / NBRC 101360 / PT)</name>
    <name type="common">Methanosaeta thermophila</name>
    <dbReference type="NCBI Taxonomy" id="349307"/>
    <lineage>
        <taxon>Archaea</taxon>
        <taxon>Methanobacteriati</taxon>
        <taxon>Methanobacteriota</taxon>
        <taxon>Stenosarchaea group</taxon>
        <taxon>Methanomicrobia</taxon>
        <taxon>Methanotrichales</taxon>
        <taxon>Methanotrichaceae</taxon>
        <taxon>Methanothrix</taxon>
    </lineage>
</organism>